<keyword id="KW-0012">Acyltransferase</keyword>
<keyword id="KW-0028">Amino-acid biosynthesis</keyword>
<keyword id="KW-0198">Cysteine biosynthesis</keyword>
<keyword id="KW-0496">Mitochondrion</keyword>
<keyword id="KW-1185">Reference proteome</keyword>
<keyword id="KW-0808">Transferase</keyword>
<keyword id="KW-0809">Transit peptide</keyword>
<reference key="1">
    <citation type="journal article" date="2000" name="Microbiology">
        <title>The Aspergillus nidulans cysA gene encodes a novel type of serine O-acetyltransferase which is homologous to homoserine O-acetyltransferases.</title>
        <authorList>
            <person name="Grynberg M."/>
            <person name="Topczewski J."/>
            <person name="Godzik A."/>
            <person name="Paszewski A."/>
        </authorList>
    </citation>
    <scope>NUCLEOTIDE SEQUENCE [GENOMIC DNA]</scope>
    <scope>PATHWAY</scope>
</reference>
<reference key="2">
    <citation type="journal article" date="2005" name="Nature">
        <title>Sequencing of Aspergillus nidulans and comparative analysis with A. fumigatus and A. oryzae.</title>
        <authorList>
            <person name="Galagan J.E."/>
            <person name="Calvo S.E."/>
            <person name="Cuomo C."/>
            <person name="Ma L.-J."/>
            <person name="Wortman J.R."/>
            <person name="Batzoglou S."/>
            <person name="Lee S.-I."/>
            <person name="Bastuerkmen M."/>
            <person name="Spevak C.C."/>
            <person name="Clutterbuck J."/>
            <person name="Kapitonov V."/>
            <person name="Jurka J."/>
            <person name="Scazzocchio C."/>
            <person name="Farman M.L."/>
            <person name="Butler J."/>
            <person name="Purcell S."/>
            <person name="Harris S."/>
            <person name="Braus G.H."/>
            <person name="Draht O."/>
            <person name="Busch S."/>
            <person name="D'Enfert C."/>
            <person name="Bouchier C."/>
            <person name="Goldman G.H."/>
            <person name="Bell-Pedersen D."/>
            <person name="Griffiths-Jones S."/>
            <person name="Doonan J.H."/>
            <person name="Yu J."/>
            <person name="Vienken K."/>
            <person name="Pain A."/>
            <person name="Freitag M."/>
            <person name="Selker E.U."/>
            <person name="Archer D.B."/>
            <person name="Penalva M.A."/>
            <person name="Oakley B.R."/>
            <person name="Momany M."/>
            <person name="Tanaka T."/>
            <person name="Kumagai T."/>
            <person name="Asai K."/>
            <person name="Machida M."/>
            <person name="Nierman W.C."/>
            <person name="Denning D.W."/>
            <person name="Caddick M.X."/>
            <person name="Hynes M."/>
            <person name="Paoletti M."/>
            <person name="Fischer R."/>
            <person name="Miller B.L."/>
            <person name="Dyer P.S."/>
            <person name="Sachs M.S."/>
            <person name="Osmani S.A."/>
            <person name="Birren B.W."/>
        </authorList>
    </citation>
    <scope>NUCLEOTIDE SEQUENCE [LARGE SCALE GENOMIC DNA]</scope>
    <source>
        <strain>FGSC A4 / ATCC 38163 / CBS 112.46 / NRRL 194 / M139</strain>
    </source>
</reference>
<reference key="3">
    <citation type="journal article" date="2009" name="Fungal Genet. Biol.">
        <title>The 2008 update of the Aspergillus nidulans genome annotation: a community effort.</title>
        <authorList>
            <person name="Wortman J.R."/>
            <person name="Gilsenan J.M."/>
            <person name="Joardar V."/>
            <person name="Deegan J."/>
            <person name="Clutterbuck J."/>
            <person name="Andersen M.R."/>
            <person name="Archer D."/>
            <person name="Bencina M."/>
            <person name="Braus G."/>
            <person name="Coutinho P."/>
            <person name="von Dohren H."/>
            <person name="Doonan J."/>
            <person name="Driessen A.J."/>
            <person name="Durek P."/>
            <person name="Espeso E."/>
            <person name="Fekete E."/>
            <person name="Flipphi M."/>
            <person name="Estrada C.G."/>
            <person name="Geysens S."/>
            <person name="Goldman G."/>
            <person name="de Groot P.W."/>
            <person name="Hansen K."/>
            <person name="Harris S.D."/>
            <person name="Heinekamp T."/>
            <person name="Helmstaedt K."/>
            <person name="Henrissat B."/>
            <person name="Hofmann G."/>
            <person name="Homan T."/>
            <person name="Horio T."/>
            <person name="Horiuchi H."/>
            <person name="James S."/>
            <person name="Jones M."/>
            <person name="Karaffa L."/>
            <person name="Karanyi Z."/>
            <person name="Kato M."/>
            <person name="Keller N."/>
            <person name="Kelly D.E."/>
            <person name="Kiel J.A."/>
            <person name="Kim J.M."/>
            <person name="van der Klei I.J."/>
            <person name="Klis F.M."/>
            <person name="Kovalchuk A."/>
            <person name="Krasevec N."/>
            <person name="Kubicek C.P."/>
            <person name="Liu B."/>
            <person name="Maccabe A."/>
            <person name="Meyer V."/>
            <person name="Mirabito P."/>
            <person name="Miskei M."/>
            <person name="Mos M."/>
            <person name="Mullins J."/>
            <person name="Nelson D.R."/>
            <person name="Nielsen J."/>
            <person name="Oakley B.R."/>
            <person name="Osmani S.A."/>
            <person name="Pakula T."/>
            <person name="Paszewski A."/>
            <person name="Paulsen I."/>
            <person name="Pilsyk S."/>
            <person name="Pocsi I."/>
            <person name="Punt P.J."/>
            <person name="Ram A.F."/>
            <person name="Ren Q."/>
            <person name="Robellet X."/>
            <person name="Robson G."/>
            <person name="Seiboth B."/>
            <person name="van Solingen P."/>
            <person name="Specht T."/>
            <person name="Sun J."/>
            <person name="Taheri-Talesh N."/>
            <person name="Takeshita N."/>
            <person name="Ussery D."/>
            <person name="vanKuyk P.A."/>
            <person name="Visser H."/>
            <person name="van de Vondervoort P.J."/>
            <person name="de Vries R.P."/>
            <person name="Walton J."/>
            <person name="Xiang X."/>
            <person name="Xiong Y."/>
            <person name="Zeng A.P."/>
            <person name="Brandt B.W."/>
            <person name="Cornell M.J."/>
            <person name="van den Hondel C.A."/>
            <person name="Visser J."/>
            <person name="Oliver S.G."/>
            <person name="Turner G."/>
        </authorList>
    </citation>
    <scope>GENOME REANNOTATION</scope>
    <source>
        <strain>FGSC A4 / ATCC 38163 / CBS 112.46 / NRRL 194 / M139</strain>
    </source>
</reference>
<reference key="4">
    <citation type="journal article" date="2017" name="Nat. Chem. Biol.">
        <title>Parallel evolution of non-homologous isofunctional enzymes in methionine biosynthesis.</title>
        <authorList>
            <person name="Bastard K."/>
            <person name="Perret A."/>
            <person name="Mariage A."/>
            <person name="Bessonnet T."/>
            <person name="Pinet-Turpault A."/>
            <person name="Petit J.L."/>
            <person name="Darii E."/>
            <person name="Bazire P."/>
            <person name="Vergne-Vaxelaire C."/>
            <person name="Brewee C."/>
            <person name="Debard A."/>
            <person name="Pellouin V."/>
            <person name="Besnard-Gonnet M."/>
            <person name="Artiguenave F."/>
            <person name="Medigue C."/>
            <person name="Vallenet D."/>
            <person name="Danchin A."/>
            <person name="Zaparucha A."/>
            <person name="Weissenbach J."/>
            <person name="Salanoubat M."/>
            <person name="de Berardinis V."/>
        </authorList>
    </citation>
    <scope>FUNCTION</scope>
    <scope>CATALYTIC ACTIVITY</scope>
    <scope>PATHWAY</scope>
    <source>
        <strain>ATCC 11267 / DSM 820</strain>
    </source>
</reference>
<gene>
    <name evidence="6" type="primary">cysA</name>
    <name type="ORF">AN8565</name>
</gene>
<accession>Q5AT15</accession>
<accession>C8VET6</accession>
<accession>O13389</accession>
<name>SST_EMENI</name>
<comment type="function">
    <text evidence="5">Transfers a succinyl group from succinyl-CoA to L-serine, forming succinyl-L-serine. Also has weak serine acetyl transferase activity and homoserine succinyl transferase activity.</text>
</comment>
<comment type="catalytic activity">
    <reaction evidence="5">
        <text>succinyl-CoA + L-serine = O-succinyl-L-serine + CoA</text>
        <dbReference type="Rhea" id="RHEA:52820"/>
        <dbReference type="ChEBI" id="CHEBI:33384"/>
        <dbReference type="ChEBI" id="CHEBI:57287"/>
        <dbReference type="ChEBI" id="CHEBI:57292"/>
        <dbReference type="ChEBI" id="CHEBI:136856"/>
    </reaction>
</comment>
<comment type="pathway">
    <text evidence="9 10">Amino-acid biosynthesis; L-cysteine biosynthesis; L-cysteine from L-serine: step 1/2.</text>
</comment>
<comment type="subcellular location">
    <subcellularLocation>
        <location evidence="2">Mitochondrion</location>
    </subcellularLocation>
</comment>
<comment type="similarity">
    <text evidence="8">Belongs to the AB hydrolase superfamily. MetX family.</text>
</comment>
<comment type="sequence caution" evidence="8">
    <conflict type="frameshift">
        <sequence resource="EMBL-CDS" id="AAB84208"/>
    </conflict>
</comment>
<dbReference type="EC" id="2.3.1.-" evidence="5"/>
<dbReference type="EMBL" id="AF029885">
    <property type="protein sequence ID" value="AAB84208.1"/>
    <property type="status" value="ALT_FRAME"/>
    <property type="molecule type" value="Genomic_DNA"/>
</dbReference>
<dbReference type="EMBL" id="AACD01000157">
    <property type="protein sequence ID" value="EAA66990.1"/>
    <property type="molecule type" value="Genomic_DNA"/>
</dbReference>
<dbReference type="EMBL" id="BN001305">
    <property type="protein sequence ID" value="CBF80811.1"/>
    <property type="molecule type" value="Genomic_DNA"/>
</dbReference>
<dbReference type="RefSeq" id="XP_681834.1">
    <property type="nucleotide sequence ID" value="XM_676742.1"/>
</dbReference>
<dbReference type="SMR" id="Q5AT15"/>
<dbReference type="STRING" id="227321.Q5AT15"/>
<dbReference type="ESTHER" id="emeni-CYSC">
    <property type="family name" value="Homoserine_transacetylase"/>
</dbReference>
<dbReference type="EnsemblFungi" id="CBF80811">
    <property type="protein sequence ID" value="CBF80811"/>
    <property type="gene ID" value="ANIA_08565"/>
</dbReference>
<dbReference type="KEGG" id="ani:ANIA_08565"/>
<dbReference type="VEuPathDB" id="FungiDB:AN8565"/>
<dbReference type="eggNOG" id="ENOG502QR3J">
    <property type="taxonomic scope" value="Eukaryota"/>
</dbReference>
<dbReference type="HOGENOM" id="CLU_028760_7_0_1"/>
<dbReference type="InParanoid" id="Q5AT15"/>
<dbReference type="OMA" id="HPILVMG"/>
<dbReference type="OrthoDB" id="444135at2759"/>
<dbReference type="BRENDA" id="2.3.1.30">
    <property type="organism ID" value="517"/>
</dbReference>
<dbReference type="UniPathway" id="UPA00136">
    <property type="reaction ID" value="UER00199"/>
</dbReference>
<dbReference type="Proteomes" id="UP000000560">
    <property type="component" value="Chromosome V"/>
</dbReference>
<dbReference type="GO" id="GO:0005739">
    <property type="term" value="C:mitochondrion"/>
    <property type="evidence" value="ECO:0007669"/>
    <property type="project" value="UniProtKB-SubCell"/>
</dbReference>
<dbReference type="GO" id="GO:0160210">
    <property type="term" value="F:L-serine O-succinyltransferase activity"/>
    <property type="evidence" value="ECO:0007669"/>
    <property type="project" value="EnsemblFungi"/>
</dbReference>
<dbReference type="GO" id="GO:0009001">
    <property type="term" value="F:serine O-acetyltransferase activity"/>
    <property type="evidence" value="ECO:0000315"/>
    <property type="project" value="AspGD"/>
</dbReference>
<dbReference type="GO" id="GO:0006535">
    <property type="term" value="P:cysteine biosynthetic process from serine"/>
    <property type="evidence" value="ECO:0000318"/>
    <property type="project" value="GO_Central"/>
</dbReference>
<dbReference type="GO" id="GO:0006534">
    <property type="term" value="P:cysteine metabolic process"/>
    <property type="evidence" value="ECO:0000315"/>
    <property type="project" value="AspGD"/>
</dbReference>
<dbReference type="Gene3D" id="3.40.50.1820">
    <property type="entry name" value="alpha/beta hydrolase"/>
    <property type="match status" value="1"/>
</dbReference>
<dbReference type="HAMAP" id="MF_00296">
    <property type="entry name" value="MetX_acyltransf"/>
    <property type="match status" value="1"/>
</dbReference>
<dbReference type="InterPro" id="IPR000073">
    <property type="entry name" value="AB_hydrolase_1"/>
</dbReference>
<dbReference type="InterPro" id="IPR029058">
    <property type="entry name" value="AB_hydrolase_fold"/>
</dbReference>
<dbReference type="InterPro" id="IPR008220">
    <property type="entry name" value="HAT_MetX-like"/>
</dbReference>
<dbReference type="NCBIfam" id="TIGR01392">
    <property type="entry name" value="homoserO_Ac_trn"/>
    <property type="match status" value="1"/>
</dbReference>
<dbReference type="NCBIfam" id="NF001209">
    <property type="entry name" value="PRK00175.1"/>
    <property type="match status" value="1"/>
</dbReference>
<dbReference type="PANTHER" id="PTHR32268">
    <property type="entry name" value="HOMOSERINE O-ACETYLTRANSFERASE"/>
    <property type="match status" value="1"/>
</dbReference>
<dbReference type="PANTHER" id="PTHR32268:SF16">
    <property type="entry name" value="SERINE O-SUCCINYLTRANSFERASE"/>
    <property type="match status" value="1"/>
</dbReference>
<dbReference type="Pfam" id="PF00561">
    <property type="entry name" value="Abhydrolase_1"/>
    <property type="match status" value="1"/>
</dbReference>
<dbReference type="PIRSF" id="PIRSF000443">
    <property type="entry name" value="Homoser_Ac_trans"/>
    <property type="match status" value="1"/>
</dbReference>
<dbReference type="SUPFAM" id="SSF53474">
    <property type="entry name" value="alpha/beta-Hydrolases"/>
    <property type="match status" value="1"/>
</dbReference>
<organism>
    <name type="scientific">Emericella nidulans (strain FGSC A4 / ATCC 38163 / CBS 112.46 / NRRL 194 / M139)</name>
    <name type="common">Aspergillus nidulans</name>
    <dbReference type="NCBI Taxonomy" id="227321"/>
    <lineage>
        <taxon>Eukaryota</taxon>
        <taxon>Fungi</taxon>
        <taxon>Dikarya</taxon>
        <taxon>Ascomycota</taxon>
        <taxon>Pezizomycotina</taxon>
        <taxon>Eurotiomycetes</taxon>
        <taxon>Eurotiomycetidae</taxon>
        <taxon>Eurotiales</taxon>
        <taxon>Aspergillaceae</taxon>
        <taxon>Aspergillus</taxon>
        <taxon>Aspergillus subgen. Nidulantes</taxon>
    </lineage>
</organism>
<evidence type="ECO:0000250" key="1">
    <source>
        <dbReference type="UniProtKB" id="P45131"/>
    </source>
</evidence>
<evidence type="ECO:0000250" key="2">
    <source>
        <dbReference type="UniProtKB" id="Q10341"/>
    </source>
</evidence>
<evidence type="ECO:0000255" key="3"/>
<evidence type="ECO:0000256" key="4">
    <source>
        <dbReference type="SAM" id="MobiDB-lite"/>
    </source>
</evidence>
<evidence type="ECO:0000269" key="5">
    <source>
    </source>
</evidence>
<evidence type="ECO:0000303" key="6">
    <source>
    </source>
</evidence>
<evidence type="ECO:0000303" key="7">
    <source>
    </source>
</evidence>
<evidence type="ECO:0000305" key="8"/>
<evidence type="ECO:0000305" key="9">
    <source>
    </source>
</evidence>
<evidence type="ECO:0000305" key="10">
    <source>
    </source>
</evidence>
<proteinExistence type="evidence at protein level"/>
<protein>
    <recommendedName>
        <fullName evidence="8">Serine O-succinyltransferase</fullName>
        <shortName evidence="7">SST</shortName>
        <ecNumber evidence="5">2.3.1.-</ecNumber>
    </recommendedName>
</protein>
<sequence>MSPLNGVARSFPRPFQAVTRRPFRVVQPAIACPSNSRSFNHSRSLRSTGSQSPAPSPRDSSNPALSFPCLDAQEAKSALLSARSLGSGPEPSYTAGHHERFHSDEPLLLDWGGLLPEFDIAYETWGQLNEKKDNVILLHTGLSASSHAHSTEANPKPGWWEKFIGPGKTLDTDKYFVICTNVLGGCYGSTGPSTVDPSDGKKYATRFPILTIEDMVRAQFRLLDHLGVRKLYASVGSSMGGMQSLAAGVLFPERVGKIVSISGCARSHPYSIAMRHTQRQVLMMDPNWARGFYYDSIPPHSGMKLAREIATVTYRSGPEWEKRFGRKRADPSKQPALCPDFLIETYLDHAGEKFCLEYDANSLLYISKAMDLFDLGLTQQLATKKQRAEAQAKISSGTNTVNDASCSLTLPEQPYQEQPSASTSAEQSASASETGSAPNDLVAGLAPLKDHQVLVIGVASDILFPAWQQREIAETLIQAGNKTVEHIELGNDVSLFGHDTFLLDVKNVGGAVRKFLD</sequence>
<feature type="transit peptide" description="Mitochondrion" evidence="3">
    <location>
        <begin position="1"/>
        <end position="46"/>
    </location>
</feature>
<feature type="chain" id="PRO_0000436606" description="Serine O-succinyltransferase">
    <location>
        <begin position="47"/>
        <end position="517"/>
    </location>
</feature>
<feature type="domain" description="AB hydrolase-1" evidence="3">
    <location>
        <begin position="134"/>
        <end position="386"/>
    </location>
</feature>
<feature type="region of interest" description="Disordered" evidence="4">
    <location>
        <begin position="36"/>
        <end position="66"/>
    </location>
</feature>
<feature type="region of interest" description="Important for substrate specificity" evidence="10">
    <location>
        <begin position="141"/>
        <end position="144"/>
    </location>
</feature>
<feature type="region of interest" description="Disordered" evidence="4">
    <location>
        <begin position="413"/>
        <end position="436"/>
    </location>
</feature>
<feature type="compositionally biased region" description="Polar residues" evidence="4">
    <location>
        <begin position="36"/>
        <end position="64"/>
    </location>
</feature>
<feature type="compositionally biased region" description="Low complexity" evidence="4">
    <location>
        <begin position="416"/>
        <end position="436"/>
    </location>
</feature>
<feature type="active site" description="Nucleophile" evidence="1">
    <location>
        <position position="238"/>
    </location>
</feature>
<feature type="active site" evidence="1">
    <location>
        <position position="461"/>
    </location>
</feature>
<feature type="active site" evidence="1">
    <location>
        <position position="498"/>
    </location>
</feature>
<feature type="binding site" evidence="1">
    <location>
        <position position="307"/>
    </location>
    <ligand>
        <name>substrate</name>
    </ligand>
</feature>
<feature type="binding site" evidence="1">
    <location>
        <position position="499"/>
    </location>
    <ligand>
        <name>substrate</name>
    </ligand>
</feature>
<feature type="site" description="Important for acyl-CoA specificity" evidence="10">
    <location>
        <position position="275"/>
    </location>
</feature>